<gene>
    <name evidence="4" type="primary">UP3</name>
    <name evidence="7" type="ordered locus">At2g31670</name>
</gene>
<dbReference type="EMBL" id="AC007071">
    <property type="protein sequence ID" value="AAD24844.1"/>
    <property type="molecule type" value="Genomic_DNA"/>
</dbReference>
<dbReference type="EMBL" id="CP002685">
    <property type="protein sequence ID" value="AEC08571.1"/>
    <property type="molecule type" value="Genomic_DNA"/>
</dbReference>
<dbReference type="EMBL" id="BT010905">
    <property type="protein sequence ID" value="AAR24683.1"/>
    <property type="molecule type" value="mRNA"/>
</dbReference>
<dbReference type="EMBL" id="BT011004">
    <property type="protein sequence ID" value="AAR25640.1"/>
    <property type="molecule type" value="mRNA"/>
</dbReference>
<dbReference type="EMBL" id="AK228524">
    <property type="protein sequence ID" value="BAF00446.1"/>
    <property type="status" value="ALT_INIT"/>
    <property type="molecule type" value="mRNA"/>
</dbReference>
<dbReference type="PIR" id="F84723">
    <property type="entry name" value="F84723"/>
</dbReference>
<dbReference type="RefSeq" id="NP_180725.1">
    <property type="nucleotide sequence ID" value="NM_128724.4"/>
</dbReference>
<dbReference type="SMR" id="Q9SIP1"/>
<dbReference type="FunCoup" id="Q9SIP1">
    <property type="interactions" value="1081"/>
</dbReference>
<dbReference type="STRING" id="3702.Q9SIP1"/>
<dbReference type="iPTMnet" id="Q9SIP1"/>
<dbReference type="MetOSite" id="Q9SIP1"/>
<dbReference type="PaxDb" id="3702-AT2G31670.1"/>
<dbReference type="ProteomicsDB" id="232999"/>
<dbReference type="EnsemblPlants" id="AT2G31670.1">
    <property type="protein sequence ID" value="AT2G31670.1"/>
    <property type="gene ID" value="AT2G31670"/>
</dbReference>
<dbReference type="GeneID" id="817723"/>
<dbReference type="Gramene" id="AT2G31670.1">
    <property type="protein sequence ID" value="AT2G31670.1"/>
    <property type="gene ID" value="AT2G31670"/>
</dbReference>
<dbReference type="KEGG" id="ath:AT2G31670"/>
<dbReference type="Araport" id="AT2G31670"/>
<dbReference type="TAIR" id="AT2G31670">
    <property type="gene designation" value="UP3"/>
</dbReference>
<dbReference type="eggNOG" id="ENOG502QTKV">
    <property type="taxonomic scope" value="Eukaryota"/>
</dbReference>
<dbReference type="HOGENOM" id="CLU_087754_0_0_1"/>
<dbReference type="InParanoid" id="Q9SIP1"/>
<dbReference type="OMA" id="SPIAFTH"/>
<dbReference type="OrthoDB" id="42919at2759"/>
<dbReference type="PhylomeDB" id="Q9SIP1"/>
<dbReference type="PRO" id="PR:Q9SIP1"/>
<dbReference type="Proteomes" id="UP000006548">
    <property type="component" value="Chromosome 2"/>
</dbReference>
<dbReference type="ExpressionAtlas" id="Q9SIP1">
    <property type="expression patterns" value="baseline and differential"/>
</dbReference>
<dbReference type="GO" id="GO:0009507">
    <property type="term" value="C:chloroplast"/>
    <property type="evidence" value="ECO:0007005"/>
    <property type="project" value="TAIR"/>
</dbReference>
<dbReference type="GO" id="GO:0009570">
    <property type="term" value="C:chloroplast stroma"/>
    <property type="evidence" value="ECO:0007005"/>
    <property type="project" value="TAIR"/>
</dbReference>
<dbReference type="GO" id="GO:0005739">
    <property type="term" value="C:mitochondrion"/>
    <property type="evidence" value="ECO:0007005"/>
    <property type="project" value="TAIR"/>
</dbReference>
<dbReference type="GO" id="GO:0005777">
    <property type="term" value="C:peroxisome"/>
    <property type="evidence" value="ECO:0000314"/>
    <property type="project" value="TAIR"/>
</dbReference>
<dbReference type="FunFam" id="3.30.70.100:FF:000103">
    <property type="entry name" value="Stress-response A/B barrel domain-containing protein UP3"/>
    <property type="match status" value="1"/>
</dbReference>
<dbReference type="Gene3D" id="3.30.70.100">
    <property type="match status" value="2"/>
</dbReference>
<dbReference type="InterPro" id="IPR013097">
    <property type="entry name" value="Dabb"/>
</dbReference>
<dbReference type="InterPro" id="IPR011008">
    <property type="entry name" value="Dimeric_a/b-barrel"/>
</dbReference>
<dbReference type="InterPro" id="IPR044662">
    <property type="entry name" value="HS1/DABB1-like"/>
</dbReference>
<dbReference type="PANTHER" id="PTHR33178">
    <property type="match status" value="1"/>
</dbReference>
<dbReference type="PANTHER" id="PTHR33178:SF3">
    <property type="entry name" value="STRESS-RESPONSE A_B BARREL DOMAIN-CONTAINING PROTEIN UP3"/>
    <property type="match status" value="1"/>
</dbReference>
<dbReference type="Pfam" id="PF07876">
    <property type="entry name" value="Dabb"/>
    <property type="match status" value="2"/>
</dbReference>
<dbReference type="SMART" id="SM00886">
    <property type="entry name" value="Dabb"/>
    <property type="match status" value="2"/>
</dbReference>
<dbReference type="SUPFAM" id="SSF54909">
    <property type="entry name" value="Dimeric alpha+beta barrel"/>
    <property type="match status" value="2"/>
</dbReference>
<dbReference type="PROSITE" id="PS51502">
    <property type="entry name" value="S_R_A_B_BARREL"/>
    <property type="match status" value="2"/>
</dbReference>
<accession>Q9SIP1</accession>
<accession>Q0WR03</accession>
<sequence>MICARIRPLISSPLAFTISTTKHSRINLRLLPRRSFSVMSSSTPQSQIIEHIVLFKTKDDADSTKITSMINNLNALAYLDQVLHISTSPLHRISSATAFTHVLHSRYESKEDLASYAAHPDHVRVVKESVLPICDDIMAVDWIADRIPGTVAPLPGSVAKLTLLKLKEDVADEAKSEITGVIKGLSEKFPGIDQITVGENFSPARAKGFSIASIAYFKDLSEMEAVDAQKELVNSQKDKVRDYVDSTIVVEFVVPSSSQSSSL</sequence>
<protein>
    <recommendedName>
        <fullName evidence="5">Stress-response A/B barrel domain-containing protein UP3</fullName>
    </recommendedName>
    <alternativeName>
        <fullName evidence="4">Unknown protein 3</fullName>
    </alternativeName>
</protein>
<name>UP3_ARATH</name>
<keyword id="KW-0576">Peroxisome</keyword>
<keyword id="KW-1185">Reference proteome</keyword>
<keyword id="KW-0346">Stress response</keyword>
<feature type="chain" id="PRO_0000436070" description="Stress-response A/B barrel domain-containing protein UP3">
    <location>
        <begin position="1"/>
        <end position="263"/>
    </location>
</feature>
<feature type="domain" description="Stress-response A/B barrel 1" evidence="2">
    <location>
        <begin position="49"/>
        <end position="142"/>
    </location>
</feature>
<feature type="domain" description="Stress-response A/B barrel 2" evidence="2">
    <location>
        <begin position="158"/>
        <end position="252"/>
    </location>
</feature>
<feature type="short sequence motif" description="Peroxisomal targeting signal" evidence="6">
    <location>
        <begin position="261"/>
        <end position="263"/>
    </location>
</feature>
<proteinExistence type="evidence at protein level"/>
<reference key="1">
    <citation type="journal article" date="1999" name="Nature">
        <title>Sequence and analysis of chromosome 2 of the plant Arabidopsis thaliana.</title>
        <authorList>
            <person name="Lin X."/>
            <person name="Kaul S."/>
            <person name="Rounsley S.D."/>
            <person name="Shea T.P."/>
            <person name="Benito M.-I."/>
            <person name="Town C.D."/>
            <person name="Fujii C.Y."/>
            <person name="Mason T.M."/>
            <person name="Bowman C.L."/>
            <person name="Barnstead M.E."/>
            <person name="Feldblyum T.V."/>
            <person name="Buell C.R."/>
            <person name="Ketchum K.A."/>
            <person name="Lee J.J."/>
            <person name="Ronning C.M."/>
            <person name="Koo H.L."/>
            <person name="Moffat K.S."/>
            <person name="Cronin L.A."/>
            <person name="Shen M."/>
            <person name="Pai G."/>
            <person name="Van Aken S."/>
            <person name="Umayam L."/>
            <person name="Tallon L.J."/>
            <person name="Gill J.E."/>
            <person name="Adams M.D."/>
            <person name="Carrera A.J."/>
            <person name="Creasy T.H."/>
            <person name="Goodman H.M."/>
            <person name="Somerville C.R."/>
            <person name="Copenhaver G.P."/>
            <person name="Preuss D."/>
            <person name="Nierman W.C."/>
            <person name="White O."/>
            <person name="Eisen J.A."/>
            <person name="Salzberg S.L."/>
            <person name="Fraser C.M."/>
            <person name="Venter J.C."/>
        </authorList>
    </citation>
    <scope>NUCLEOTIDE SEQUENCE [LARGE SCALE GENOMIC DNA]</scope>
    <source>
        <strain>cv. Columbia</strain>
    </source>
</reference>
<reference key="2">
    <citation type="journal article" date="2017" name="Plant J.">
        <title>Araport11: a complete reannotation of the Arabidopsis thaliana reference genome.</title>
        <authorList>
            <person name="Cheng C.Y."/>
            <person name="Krishnakumar V."/>
            <person name="Chan A.P."/>
            <person name="Thibaud-Nissen F."/>
            <person name="Schobel S."/>
            <person name="Town C.D."/>
        </authorList>
    </citation>
    <scope>GENOME REANNOTATION</scope>
    <source>
        <strain>cv. Columbia</strain>
    </source>
</reference>
<reference key="3">
    <citation type="submission" date="2003-12" db="EMBL/GenBank/DDBJ databases">
        <title>Arabidopsis cDNA clones.</title>
        <authorList>
            <person name="Kim C.J."/>
            <person name="Chen H."/>
            <person name="Cheuk R.F."/>
            <person name="Shinn P."/>
            <person name="Ecker J.R."/>
        </authorList>
    </citation>
    <scope>NUCLEOTIDE SEQUENCE [LARGE SCALE MRNA]</scope>
    <source>
        <strain>cv. Columbia</strain>
    </source>
</reference>
<reference key="4">
    <citation type="submission" date="2006-07" db="EMBL/GenBank/DDBJ databases">
        <title>Large-scale analysis of RIKEN Arabidopsis full-length (RAFL) cDNAs.</title>
        <authorList>
            <person name="Totoki Y."/>
            <person name="Seki M."/>
            <person name="Ishida J."/>
            <person name="Nakajima M."/>
            <person name="Enju A."/>
            <person name="Kamiya A."/>
            <person name="Narusaka M."/>
            <person name="Shin-i T."/>
            <person name="Nakagawa M."/>
            <person name="Sakamoto N."/>
            <person name="Oishi K."/>
            <person name="Kohara Y."/>
            <person name="Kobayashi M."/>
            <person name="Toyoda A."/>
            <person name="Sakaki Y."/>
            <person name="Sakurai T."/>
            <person name="Iida K."/>
            <person name="Akiyama K."/>
            <person name="Satou M."/>
            <person name="Toyoda T."/>
            <person name="Konagaya A."/>
            <person name="Carninci P."/>
            <person name="Kawai J."/>
            <person name="Hayashizaki Y."/>
            <person name="Shinozaki K."/>
        </authorList>
    </citation>
    <scope>NUCLEOTIDE SEQUENCE [LARGE SCALE MRNA]</scope>
    <source>
        <strain>cv. Columbia</strain>
    </source>
</reference>
<reference key="5">
    <citation type="journal article" date="2007" name="Plant Cell">
        <title>Proteome analysis of Arabidopsis leaf peroxisomes reveals novel targeting peptides, metabolic pathways, and defense mechanisms.</title>
        <authorList>
            <person name="Reumann S."/>
            <person name="Babujee L."/>
            <person name="Ma C."/>
            <person name="Wienkoop S."/>
            <person name="Siemsen T."/>
            <person name="Antonicelli G.E."/>
            <person name="Rasche N."/>
            <person name="Lueder F."/>
            <person name="Weckwerth W."/>
            <person name="Jahn O."/>
        </authorList>
    </citation>
    <scope>IDENTIFICATION BY MASS SPECTROMETRY</scope>
</reference>
<reference key="6">
    <citation type="journal article" date="2013" name="Plant Physiol.">
        <title>Proteome analysis of peroxisomes from etiolated Arabidopsis seedlings identifies a peroxisomal protease involved in beta-oxidation and development.</title>
        <authorList>
            <person name="Quan S."/>
            <person name="Yang P."/>
            <person name="Cassin-Ross G."/>
            <person name="Kaur N."/>
            <person name="Switzenberg R."/>
            <person name="Aung K."/>
            <person name="Li J."/>
            <person name="Hu J."/>
        </authorList>
    </citation>
    <scope>SUBCELLULAR LOCATION</scope>
</reference>
<evidence type="ECO:0000250" key="1">
    <source>
        <dbReference type="UniProtKB" id="Q9LUV2"/>
    </source>
</evidence>
<evidence type="ECO:0000255" key="2">
    <source>
        <dbReference type="PROSITE-ProRule" id="PRU00835"/>
    </source>
</evidence>
<evidence type="ECO:0000269" key="3">
    <source>
    </source>
</evidence>
<evidence type="ECO:0000303" key="4">
    <source>
    </source>
</evidence>
<evidence type="ECO:0000305" key="5"/>
<evidence type="ECO:0000305" key="6">
    <source>
    </source>
</evidence>
<evidence type="ECO:0000312" key="7">
    <source>
        <dbReference type="Araport" id="AT2G31670"/>
    </source>
</evidence>
<organism>
    <name type="scientific">Arabidopsis thaliana</name>
    <name type="common">Mouse-ear cress</name>
    <dbReference type="NCBI Taxonomy" id="3702"/>
    <lineage>
        <taxon>Eukaryota</taxon>
        <taxon>Viridiplantae</taxon>
        <taxon>Streptophyta</taxon>
        <taxon>Embryophyta</taxon>
        <taxon>Tracheophyta</taxon>
        <taxon>Spermatophyta</taxon>
        <taxon>Magnoliopsida</taxon>
        <taxon>eudicotyledons</taxon>
        <taxon>Gunneridae</taxon>
        <taxon>Pentapetalae</taxon>
        <taxon>rosids</taxon>
        <taxon>malvids</taxon>
        <taxon>Brassicales</taxon>
        <taxon>Brassicaceae</taxon>
        <taxon>Camelineae</taxon>
        <taxon>Arabidopsis</taxon>
    </lineage>
</organism>
<comment type="function">
    <text evidence="5">Involved in stress response.</text>
</comment>
<comment type="subunit">
    <text evidence="1">Homodimer.</text>
</comment>
<comment type="subcellular location">
    <subcellularLocation>
        <location evidence="3">Peroxisome</location>
    </subcellularLocation>
</comment>
<comment type="sequence caution" evidence="5">
    <conflict type="miscellaneous discrepancy">
        <sequence resource="EMBL-CDS" id="BAF00446"/>
    </conflict>
    <text>Sequencing errors.</text>
</comment>